<keyword id="KW-0067">ATP-binding</keyword>
<keyword id="KW-0143">Chaperone</keyword>
<keyword id="KW-0963">Cytoplasm</keyword>
<keyword id="KW-0413">Isomerase</keyword>
<keyword id="KW-0547">Nucleotide-binding</keyword>
<dbReference type="EC" id="5.6.1.7" evidence="1"/>
<dbReference type="EMBL" id="CP000088">
    <property type="protein sequence ID" value="AAZ54266.1"/>
    <property type="molecule type" value="Genomic_DNA"/>
</dbReference>
<dbReference type="SMR" id="Q47TE8"/>
<dbReference type="STRING" id="269800.Tfu_0228"/>
<dbReference type="KEGG" id="tfu:Tfu_0228"/>
<dbReference type="eggNOG" id="COG0459">
    <property type="taxonomic scope" value="Bacteria"/>
</dbReference>
<dbReference type="HOGENOM" id="CLU_016503_3_0_11"/>
<dbReference type="OrthoDB" id="9766614at2"/>
<dbReference type="GO" id="GO:0005737">
    <property type="term" value="C:cytoplasm"/>
    <property type="evidence" value="ECO:0007669"/>
    <property type="project" value="UniProtKB-SubCell"/>
</dbReference>
<dbReference type="GO" id="GO:0005524">
    <property type="term" value="F:ATP binding"/>
    <property type="evidence" value="ECO:0007669"/>
    <property type="project" value="UniProtKB-UniRule"/>
</dbReference>
<dbReference type="GO" id="GO:0140662">
    <property type="term" value="F:ATP-dependent protein folding chaperone"/>
    <property type="evidence" value="ECO:0007669"/>
    <property type="project" value="InterPro"/>
</dbReference>
<dbReference type="GO" id="GO:0016853">
    <property type="term" value="F:isomerase activity"/>
    <property type="evidence" value="ECO:0007669"/>
    <property type="project" value="UniProtKB-KW"/>
</dbReference>
<dbReference type="GO" id="GO:0051082">
    <property type="term" value="F:unfolded protein binding"/>
    <property type="evidence" value="ECO:0007669"/>
    <property type="project" value="UniProtKB-UniRule"/>
</dbReference>
<dbReference type="GO" id="GO:0042026">
    <property type="term" value="P:protein refolding"/>
    <property type="evidence" value="ECO:0007669"/>
    <property type="project" value="UniProtKB-UniRule"/>
</dbReference>
<dbReference type="CDD" id="cd03344">
    <property type="entry name" value="GroEL"/>
    <property type="match status" value="1"/>
</dbReference>
<dbReference type="FunFam" id="3.50.7.10:FF:000001">
    <property type="entry name" value="60 kDa chaperonin"/>
    <property type="match status" value="1"/>
</dbReference>
<dbReference type="Gene3D" id="3.50.7.10">
    <property type="entry name" value="GroEL"/>
    <property type="match status" value="1"/>
</dbReference>
<dbReference type="Gene3D" id="1.10.560.10">
    <property type="entry name" value="GroEL-like equatorial domain"/>
    <property type="match status" value="1"/>
</dbReference>
<dbReference type="Gene3D" id="3.30.260.10">
    <property type="entry name" value="TCP-1-like chaperonin intermediate domain"/>
    <property type="match status" value="1"/>
</dbReference>
<dbReference type="HAMAP" id="MF_00600">
    <property type="entry name" value="CH60"/>
    <property type="match status" value="1"/>
</dbReference>
<dbReference type="InterPro" id="IPR018370">
    <property type="entry name" value="Chaperonin_Cpn60_CS"/>
</dbReference>
<dbReference type="InterPro" id="IPR001844">
    <property type="entry name" value="Cpn60/GroEL"/>
</dbReference>
<dbReference type="InterPro" id="IPR002423">
    <property type="entry name" value="Cpn60/GroEL/TCP-1"/>
</dbReference>
<dbReference type="InterPro" id="IPR027409">
    <property type="entry name" value="GroEL-like_apical_dom_sf"/>
</dbReference>
<dbReference type="InterPro" id="IPR027413">
    <property type="entry name" value="GROEL-like_equatorial_sf"/>
</dbReference>
<dbReference type="InterPro" id="IPR027410">
    <property type="entry name" value="TCP-1-like_intermed_sf"/>
</dbReference>
<dbReference type="NCBIfam" id="TIGR02348">
    <property type="entry name" value="GroEL"/>
    <property type="match status" value="1"/>
</dbReference>
<dbReference type="NCBIfam" id="NF000592">
    <property type="entry name" value="PRK00013.1"/>
    <property type="match status" value="1"/>
</dbReference>
<dbReference type="NCBIfam" id="NF009487">
    <property type="entry name" value="PRK12849.1"/>
    <property type="match status" value="1"/>
</dbReference>
<dbReference type="NCBIfam" id="NF009488">
    <property type="entry name" value="PRK12850.1"/>
    <property type="match status" value="1"/>
</dbReference>
<dbReference type="NCBIfam" id="NF009489">
    <property type="entry name" value="PRK12851.1"/>
    <property type="match status" value="1"/>
</dbReference>
<dbReference type="PANTHER" id="PTHR45633">
    <property type="entry name" value="60 KDA HEAT SHOCK PROTEIN, MITOCHONDRIAL"/>
    <property type="match status" value="1"/>
</dbReference>
<dbReference type="Pfam" id="PF00118">
    <property type="entry name" value="Cpn60_TCP1"/>
    <property type="match status" value="1"/>
</dbReference>
<dbReference type="PRINTS" id="PR00298">
    <property type="entry name" value="CHAPERONIN60"/>
</dbReference>
<dbReference type="SUPFAM" id="SSF52029">
    <property type="entry name" value="GroEL apical domain-like"/>
    <property type="match status" value="1"/>
</dbReference>
<dbReference type="SUPFAM" id="SSF48592">
    <property type="entry name" value="GroEL equatorial domain-like"/>
    <property type="match status" value="1"/>
</dbReference>
<dbReference type="SUPFAM" id="SSF54849">
    <property type="entry name" value="GroEL-intermediate domain like"/>
    <property type="match status" value="1"/>
</dbReference>
<dbReference type="PROSITE" id="PS00296">
    <property type="entry name" value="CHAPERONINS_CPN60"/>
    <property type="match status" value="1"/>
</dbReference>
<evidence type="ECO:0000255" key="1">
    <source>
        <dbReference type="HAMAP-Rule" id="MF_00600"/>
    </source>
</evidence>
<name>CH601_THEFY</name>
<proteinExistence type="inferred from homology"/>
<feature type="chain" id="PRO_0000257013" description="Chaperonin GroEL 1">
    <location>
        <begin position="1"/>
        <end position="541"/>
    </location>
</feature>
<feature type="binding site" evidence="1">
    <location>
        <begin position="30"/>
        <end position="33"/>
    </location>
    <ligand>
        <name>ATP</name>
        <dbReference type="ChEBI" id="CHEBI:30616"/>
    </ligand>
</feature>
<feature type="binding site" evidence="1">
    <location>
        <begin position="87"/>
        <end position="91"/>
    </location>
    <ligand>
        <name>ATP</name>
        <dbReference type="ChEBI" id="CHEBI:30616"/>
    </ligand>
</feature>
<feature type="binding site" evidence="1">
    <location>
        <position position="414"/>
    </location>
    <ligand>
        <name>ATP</name>
        <dbReference type="ChEBI" id="CHEBI:30616"/>
    </ligand>
</feature>
<feature type="binding site" evidence="1">
    <location>
        <begin position="478"/>
        <end position="480"/>
    </location>
    <ligand>
        <name>ATP</name>
        <dbReference type="ChEBI" id="CHEBI:30616"/>
    </ligand>
</feature>
<feature type="binding site" evidence="1">
    <location>
        <position position="494"/>
    </location>
    <ligand>
        <name>ATP</name>
        <dbReference type="ChEBI" id="CHEBI:30616"/>
    </ligand>
</feature>
<comment type="function">
    <text evidence="1">Together with its co-chaperonin GroES, plays an essential role in assisting protein folding. The GroEL-GroES system forms a nano-cage that allows encapsulation of the non-native substrate proteins and provides a physical environment optimized to promote and accelerate protein folding.</text>
</comment>
<comment type="catalytic activity">
    <reaction evidence="1">
        <text>ATP + H2O + a folded polypeptide = ADP + phosphate + an unfolded polypeptide.</text>
        <dbReference type="EC" id="5.6.1.7"/>
    </reaction>
</comment>
<comment type="subunit">
    <text evidence="1">Forms a cylinder of 14 subunits composed of two heptameric rings stacked back-to-back. Interacts with the co-chaperonin GroES.</text>
</comment>
<comment type="subcellular location">
    <subcellularLocation>
        <location evidence="1">Cytoplasm</location>
    </subcellularLocation>
</comment>
<comment type="similarity">
    <text evidence="1">Belongs to the chaperonin (HSP60) family.</text>
</comment>
<accession>Q47TE8</accession>
<reference key="1">
    <citation type="journal article" date="2007" name="J. Bacteriol.">
        <title>Genome sequence and analysis of the soil cellulolytic actinomycete Thermobifida fusca YX.</title>
        <authorList>
            <person name="Lykidis A."/>
            <person name="Mavromatis K."/>
            <person name="Ivanova N."/>
            <person name="Anderson I."/>
            <person name="Land M."/>
            <person name="DiBartolo G."/>
            <person name="Martinez M."/>
            <person name="Lapidus A."/>
            <person name="Lucas S."/>
            <person name="Copeland A."/>
            <person name="Richardson P."/>
            <person name="Wilson D.B."/>
            <person name="Kyrpides N."/>
        </authorList>
    </citation>
    <scope>NUCLEOTIDE SEQUENCE [LARGE SCALE GENOMIC DNA]</scope>
    <source>
        <strain>YX</strain>
    </source>
</reference>
<sequence length="541" mass="57523">MAAKLIAFDEEARRGLERGMNQLADAVKVTLGPKGRNVVLEKKWGAPTITNDGVSIAKEIELEDPYEKIGAELVKEVAKKTDDVAGDGTTTATVLAQALVREGLRNVAAGANPIGLKRGIDAAVARISEELANLSKEVETKEQIASTASISAGDPQIGEYIAEAMDKVGKEGVITVEEGQTFGLELELAEGMRFDKGYISPYFATDLERMETVLEDPYILIANQKISNNNEFLPVIEKVLQAGRPLVVIAEDVEGTALQTLVVNKIRGTFKSVAIKAPGFGDRRKAMLQDIAILTGGQVITEEVGLKLENTELDMLGRARKVVVTKDETTIVDGAGDASAIAGRVNEIRAEIERTDSDYDREKLQERLARLAGGVAVIKAGAATEVELKERKHRIEDAVRNAKAAVEEGILPGGGVALLQASIAAFEKLELEGDEAIGASIVRRAVEEPLKQIAINAGYEGGVVVEKVKSLEPGIGLNAATGEYTDLFKDGVIDPTKVTRSALQNAASIAGLFLTTEAVIAEKPEKPAANNAGGDMGGMDF</sequence>
<protein>
    <recommendedName>
        <fullName evidence="1">Chaperonin GroEL 1</fullName>
        <ecNumber evidence="1">5.6.1.7</ecNumber>
    </recommendedName>
    <alternativeName>
        <fullName evidence="1">60 kDa chaperonin 1</fullName>
    </alternativeName>
    <alternativeName>
        <fullName evidence="1">Chaperonin-60 1</fullName>
        <shortName evidence="1">Cpn60 1</shortName>
    </alternativeName>
</protein>
<organism>
    <name type="scientific">Thermobifida fusca (strain YX)</name>
    <dbReference type="NCBI Taxonomy" id="269800"/>
    <lineage>
        <taxon>Bacteria</taxon>
        <taxon>Bacillati</taxon>
        <taxon>Actinomycetota</taxon>
        <taxon>Actinomycetes</taxon>
        <taxon>Streptosporangiales</taxon>
        <taxon>Nocardiopsidaceae</taxon>
        <taxon>Thermobifida</taxon>
    </lineage>
</organism>
<gene>
    <name evidence="1" type="primary">groEL1</name>
    <name evidence="1" type="synonym">groL1</name>
    <name type="ordered locus">Tfu_0228</name>
</gene>